<evidence type="ECO:0000250" key="1"/>
<evidence type="ECO:0000250" key="2">
    <source>
        <dbReference type="UniProtKB" id="P01339"/>
    </source>
</evidence>
<evidence type="ECO:0000255" key="3"/>
<evidence type="ECO:0000269" key="4">
    <source ref="1"/>
</evidence>
<evidence type="ECO:0000303" key="5">
    <source ref="1"/>
</evidence>
<evidence type="ECO:0000305" key="6"/>
<proteinExistence type="evidence at protein level"/>
<name>INS_CARSE</name>
<comment type="function">
    <text evidence="1">Insulin decreases blood glucose concentration. It increases cell permeability to monosaccharides, amino acids and fatty acids. It accelerates glycolysis, the pentose phosphate cycle, and glycogen synthesis in liver (By similarity).</text>
</comment>
<comment type="subunit">
    <text evidence="1">Heterodimer of a B chain and an A chain linked by two disulfide bonds.</text>
</comment>
<comment type="subcellular location">
    <subcellularLocation>
        <location evidence="1">Secreted</location>
    </subcellularLocation>
</comment>
<comment type="similarity">
    <text evidence="3">Belongs to the insulin family.</text>
</comment>
<feature type="peptide" id="PRO_0000429382" description="Insulin B chain" evidence="4">
    <location>
        <begin position="1"/>
        <end position="30"/>
    </location>
</feature>
<feature type="peptide" id="PRO_0000429383" description="Insulin A chain" evidence="4">
    <location>
        <begin position="31"/>
        <end position="51"/>
    </location>
</feature>
<feature type="disulfide bond" description="Interchain (between B and A chains)" evidence="2">
    <location>
        <begin position="8"/>
        <end position="37"/>
    </location>
</feature>
<feature type="disulfide bond" description="Interchain (between B and A chains)" evidence="2">
    <location>
        <begin position="20"/>
        <end position="50"/>
    </location>
</feature>
<feature type="disulfide bond" evidence="2">
    <location>
        <begin position="36"/>
        <end position="41"/>
    </location>
</feature>
<feature type="non-consecutive residues" evidence="5">
    <location>
        <begin position="30"/>
        <end position="31"/>
    </location>
</feature>
<sequence>VAPPQHLCGSHLVDALYLVCGDRGFFYNPKGIVEQCCHKPCNIFDLQNYCN</sequence>
<dbReference type="SMR" id="C0HJI1"/>
<dbReference type="GO" id="GO:0005615">
    <property type="term" value="C:extracellular space"/>
    <property type="evidence" value="ECO:0007669"/>
    <property type="project" value="TreeGrafter"/>
</dbReference>
<dbReference type="GO" id="GO:0005179">
    <property type="term" value="F:hormone activity"/>
    <property type="evidence" value="ECO:0007669"/>
    <property type="project" value="UniProtKB-KW"/>
</dbReference>
<dbReference type="GO" id="GO:0006006">
    <property type="term" value="P:glucose metabolic process"/>
    <property type="evidence" value="ECO:0007669"/>
    <property type="project" value="UniProtKB-KW"/>
</dbReference>
<dbReference type="CDD" id="cd04367">
    <property type="entry name" value="IlGF_insulin_like"/>
    <property type="match status" value="1"/>
</dbReference>
<dbReference type="Gene3D" id="1.10.100.10">
    <property type="entry name" value="Insulin-like"/>
    <property type="match status" value="1"/>
</dbReference>
<dbReference type="InterPro" id="IPR004825">
    <property type="entry name" value="Insulin"/>
</dbReference>
<dbReference type="InterPro" id="IPR016179">
    <property type="entry name" value="Insulin-like"/>
</dbReference>
<dbReference type="InterPro" id="IPR036438">
    <property type="entry name" value="Insulin-like_sf"/>
</dbReference>
<dbReference type="InterPro" id="IPR022353">
    <property type="entry name" value="Insulin_CS"/>
</dbReference>
<dbReference type="InterPro" id="IPR022352">
    <property type="entry name" value="Insulin_family"/>
</dbReference>
<dbReference type="PANTHER" id="PTHR11454:SF9">
    <property type="entry name" value="INSULIN"/>
    <property type="match status" value="1"/>
</dbReference>
<dbReference type="PANTHER" id="PTHR11454">
    <property type="entry name" value="INSULIN/INSULIN GROWTH FACTOR"/>
    <property type="match status" value="1"/>
</dbReference>
<dbReference type="Pfam" id="PF00049">
    <property type="entry name" value="Insulin"/>
    <property type="match status" value="2"/>
</dbReference>
<dbReference type="PRINTS" id="PR00277">
    <property type="entry name" value="INSULIN"/>
</dbReference>
<dbReference type="PRINTS" id="PR00276">
    <property type="entry name" value="INSULINFAMLY"/>
</dbReference>
<dbReference type="SMART" id="SM00078">
    <property type="entry name" value="IlGF"/>
    <property type="match status" value="1"/>
</dbReference>
<dbReference type="SUPFAM" id="SSF56994">
    <property type="entry name" value="Insulin-like"/>
    <property type="match status" value="1"/>
</dbReference>
<dbReference type="PROSITE" id="PS00262">
    <property type="entry name" value="INSULIN"/>
    <property type="match status" value="1"/>
</dbReference>
<reference evidence="6" key="1">
    <citation type="submission" date="2014-04" db="UniProtKB">
        <title>Primary structures of pancreatic peptides from bigeye trevally (Caranx sexfasciatus).</title>
        <authorList>
            <person name="Andoh T."/>
        </authorList>
    </citation>
    <scope>PROTEIN SEQUENCE</scope>
</reference>
<protein>
    <recommendedName>
        <fullName evidence="5">Insulin</fullName>
    </recommendedName>
    <component>
        <recommendedName>
            <fullName evidence="5">Insulin B chain</fullName>
        </recommendedName>
    </component>
    <component>
        <recommendedName>
            <fullName evidence="5">Insulin A chain</fullName>
        </recommendedName>
    </component>
</protein>
<accession>C0HJI1</accession>
<keyword id="KW-0119">Carbohydrate metabolism</keyword>
<keyword id="KW-0903">Direct protein sequencing</keyword>
<keyword id="KW-1015">Disulfide bond</keyword>
<keyword id="KW-0313">Glucose metabolism</keyword>
<keyword id="KW-0372">Hormone</keyword>
<keyword id="KW-0964">Secreted</keyword>
<organism>
    <name type="scientific">Caranx sexfasciatus</name>
    <name type="common">Bigeye trevally</name>
    <dbReference type="NCBI Taxonomy" id="173346"/>
    <lineage>
        <taxon>Eukaryota</taxon>
        <taxon>Metazoa</taxon>
        <taxon>Chordata</taxon>
        <taxon>Craniata</taxon>
        <taxon>Vertebrata</taxon>
        <taxon>Euteleostomi</taxon>
        <taxon>Actinopterygii</taxon>
        <taxon>Neopterygii</taxon>
        <taxon>Teleostei</taxon>
        <taxon>Neoteleostei</taxon>
        <taxon>Acanthomorphata</taxon>
        <taxon>Carangaria</taxon>
        <taxon>Carangiformes</taxon>
        <taxon>Carangidae</taxon>
        <taxon>Caranx</taxon>
    </lineage>
</organism>